<organism>
    <name type="scientific">Lobatophasma redelinghuysense</name>
    <name type="common">Gladiator</name>
    <name type="synonym">Heel-walker</name>
    <dbReference type="NCBI Taxonomy" id="253128"/>
    <lineage>
        <taxon>Eukaryota</taxon>
        <taxon>Metazoa</taxon>
        <taxon>Ecdysozoa</taxon>
        <taxon>Arthropoda</taxon>
        <taxon>Hexapoda</taxon>
        <taxon>Insecta</taxon>
        <taxon>Pterygota</taxon>
        <taxon>Neoptera</taxon>
        <taxon>Polyneoptera</taxon>
        <taxon>Mantophasmatodea</taxon>
        <taxon>Austrophasmatidae</taxon>
        <taxon>Lobatophasma</taxon>
    </lineage>
</organism>
<name>PPK2_LOBRE</name>
<feature type="peptide" id="PRO_0000421588" description="Pyrokinin-2" evidence="3">
    <location>
        <begin position="1"/>
        <end position="8"/>
    </location>
</feature>
<feature type="modified residue" description="Leucine amide" evidence="3">
    <location>
        <position position="8"/>
    </location>
</feature>
<accession>B3A092</accession>
<protein>
    <recommendedName>
        <fullName evidence="4">Pyrokinin-2</fullName>
        <shortName evidence="4">PK-2</shortName>
    </recommendedName>
    <alternativeName>
        <fullName evidence="1">FXPRL-amide</fullName>
    </alternativeName>
</protein>
<proteinExistence type="evidence at protein level"/>
<comment type="function">
    <text evidence="1">Myoactive.</text>
</comment>
<comment type="subcellular location">
    <subcellularLocation>
        <location evidence="6">Secreted</location>
    </subcellularLocation>
</comment>
<comment type="similarity">
    <text evidence="2">Belongs to the pyrokinin family.</text>
</comment>
<dbReference type="GO" id="GO:0005576">
    <property type="term" value="C:extracellular region"/>
    <property type="evidence" value="ECO:0007669"/>
    <property type="project" value="UniProtKB-SubCell"/>
</dbReference>
<dbReference type="GO" id="GO:0007218">
    <property type="term" value="P:neuropeptide signaling pathway"/>
    <property type="evidence" value="ECO:0007669"/>
    <property type="project" value="UniProtKB-KW"/>
</dbReference>
<sequence length="8" mass="884">SPPFAPRL</sequence>
<keyword id="KW-0027">Amidation</keyword>
<keyword id="KW-0903">Direct protein sequencing</keyword>
<keyword id="KW-0527">Neuropeptide</keyword>
<keyword id="KW-0964">Secreted</keyword>
<evidence type="ECO:0000250" key="1">
    <source>
        <dbReference type="UniProtKB" id="P82619"/>
    </source>
</evidence>
<evidence type="ECO:0000255" key="2"/>
<evidence type="ECO:0000269" key="3">
    <source>
    </source>
</evidence>
<evidence type="ECO:0000303" key="4">
    <source>
    </source>
</evidence>
<evidence type="ECO:0000305" key="5"/>
<evidence type="ECO:0000305" key="6">
    <source>
    </source>
</evidence>
<reference evidence="5" key="1">
    <citation type="journal article" date="2012" name="Syst. Biol.">
        <title>Peptidomics-based phylogeny and biogeography of Mantophasmatodea (Hexapoda).</title>
        <authorList>
            <person name="Predel R."/>
            <person name="Neupert S."/>
            <person name="Huetteroth W."/>
            <person name="Kahnt J."/>
            <person name="Waidelich D."/>
            <person name="Roth S."/>
        </authorList>
    </citation>
    <scope>PROTEIN SEQUENCE</scope>
    <scope>AMIDATION AT LEU-8</scope>
    <source>
        <tissue evidence="3">Corpora cardiaca</tissue>
    </source>
</reference>